<protein>
    <recommendedName>
        <fullName evidence="5">CCR4-Not complex 3'-5'-exoribonuclease subunit Ccr4</fullName>
        <ecNumber>3.1.13.4</ecNumber>
    </recommendedName>
    <alternativeName>
        <fullName>Carbon catabolite repressor protein 4</fullName>
    </alternativeName>
    <alternativeName>
        <fullName>Cytoplasmic deadenylase</fullName>
    </alternativeName>
    <alternativeName>
        <fullName>Glucose-repressible alcohol dehydrogenase transcriptional effector</fullName>
    </alternativeName>
</protein>
<reference key="1">
    <citation type="journal article" date="2005" name="Nature">
        <title>Sequencing of Aspergillus nidulans and comparative analysis with A. fumigatus and A. oryzae.</title>
        <authorList>
            <person name="Galagan J.E."/>
            <person name="Calvo S.E."/>
            <person name="Cuomo C."/>
            <person name="Ma L.-J."/>
            <person name="Wortman J.R."/>
            <person name="Batzoglou S."/>
            <person name="Lee S.-I."/>
            <person name="Bastuerkmen M."/>
            <person name="Spevak C.C."/>
            <person name="Clutterbuck J."/>
            <person name="Kapitonov V."/>
            <person name="Jurka J."/>
            <person name="Scazzocchio C."/>
            <person name="Farman M.L."/>
            <person name="Butler J."/>
            <person name="Purcell S."/>
            <person name="Harris S."/>
            <person name="Braus G.H."/>
            <person name="Draht O."/>
            <person name="Busch S."/>
            <person name="D'Enfert C."/>
            <person name="Bouchier C."/>
            <person name="Goldman G.H."/>
            <person name="Bell-Pedersen D."/>
            <person name="Griffiths-Jones S."/>
            <person name="Doonan J.H."/>
            <person name="Yu J."/>
            <person name="Vienken K."/>
            <person name="Pain A."/>
            <person name="Freitag M."/>
            <person name="Selker E.U."/>
            <person name="Archer D.B."/>
            <person name="Penalva M.A."/>
            <person name="Oakley B.R."/>
            <person name="Momany M."/>
            <person name="Tanaka T."/>
            <person name="Kumagai T."/>
            <person name="Asai K."/>
            <person name="Machida M."/>
            <person name="Nierman W.C."/>
            <person name="Denning D.W."/>
            <person name="Caddick M.X."/>
            <person name="Hynes M."/>
            <person name="Paoletti M."/>
            <person name="Fischer R."/>
            <person name="Miller B.L."/>
            <person name="Dyer P.S."/>
            <person name="Sachs M.S."/>
            <person name="Osmani S.A."/>
            <person name="Birren B.W."/>
        </authorList>
    </citation>
    <scope>NUCLEOTIDE SEQUENCE [LARGE SCALE GENOMIC DNA]</scope>
    <source>
        <strain>FGSC A4 / ATCC 38163 / CBS 112.46 / NRRL 194 / M139</strain>
    </source>
</reference>
<reference key="2">
    <citation type="journal article" date="2009" name="Fungal Genet. Biol.">
        <title>The 2008 update of the Aspergillus nidulans genome annotation: a community effort.</title>
        <authorList>
            <person name="Wortman J.R."/>
            <person name="Gilsenan J.M."/>
            <person name="Joardar V."/>
            <person name="Deegan J."/>
            <person name="Clutterbuck J."/>
            <person name="Andersen M.R."/>
            <person name="Archer D."/>
            <person name="Bencina M."/>
            <person name="Braus G."/>
            <person name="Coutinho P."/>
            <person name="von Dohren H."/>
            <person name="Doonan J."/>
            <person name="Driessen A.J."/>
            <person name="Durek P."/>
            <person name="Espeso E."/>
            <person name="Fekete E."/>
            <person name="Flipphi M."/>
            <person name="Estrada C.G."/>
            <person name="Geysens S."/>
            <person name="Goldman G."/>
            <person name="de Groot P.W."/>
            <person name="Hansen K."/>
            <person name="Harris S.D."/>
            <person name="Heinekamp T."/>
            <person name="Helmstaedt K."/>
            <person name="Henrissat B."/>
            <person name="Hofmann G."/>
            <person name="Homan T."/>
            <person name="Horio T."/>
            <person name="Horiuchi H."/>
            <person name="James S."/>
            <person name="Jones M."/>
            <person name="Karaffa L."/>
            <person name="Karanyi Z."/>
            <person name="Kato M."/>
            <person name="Keller N."/>
            <person name="Kelly D.E."/>
            <person name="Kiel J.A."/>
            <person name="Kim J.M."/>
            <person name="van der Klei I.J."/>
            <person name="Klis F.M."/>
            <person name="Kovalchuk A."/>
            <person name="Krasevec N."/>
            <person name="Kubicek C.P."/>
            <person name="Liu B."/>
            <person name="Maccabe A."/>
            <person name="Meyer V."/>
            <person name="Mirabito P."/>
            <person name="Miskei M."/>
            <person name="Mos M."/>
            <person name="Mullins J."/>
            <person name="Nelson D.R."/>
            <person name="Nielsen J."/>
            <person name="Oakley B.R."/>
            <person name="Osmani S.A."/>
            <person name="Pakula T."/>
            <person name="Paszewski A."/>
            <person name="Paulsen I."/>
            <person name="Pilsyk S."/>
            <person name="Pocsi I."/>
            <person name="Punt P.J."/>
            <person name="Ram A.F."/>
            <person name="Ren Q."/>
            <person name="Robellet X."/>
            <person name="Robson G."/>
            <person name="Seiboth B."/>
            <person name="van Solingen P."/>
            <person name="Specht T."/>
            <person name="Sun J."/>
            <person name="Taheri-Talesh N."/>
            <person name="Takeshita N."/>
            <person name="Ussery D."/>
            <person name="vanKuyk P.A."/>
            <person name="Visser H."/>
            <person name="van de Vondervoort P.J."/>
            <person name="de Vries R.P."/>
            <person name="Walton J."/>
            <person name="Xiang X."/>
            <person name="Xiong Y."/>
            <person name="Zeng A.P."/>
            <person name="Brandt B.W."/>
            <person name="Cornell M.J."/>
            <person name="van den Hondel C.A."/>
            <person name="Visser J."/>
            <person name="Oliver S.G."/>
            <person name="Turner G."/>
        </authorList>
    </citation>
    <scope>GENOME REANNOTATION</scope>
    <source>
        <strain>FGSC A4 / ATCC 38163 / CBS 112.46 / NRRL 194 / M139</strain>
    </source>
</reference>
<gene>
    <name type="primary">ccr4</name>
    <name type="ORF">AN3602</name>
</gene>
<proteinExistence type="inferred from homology"/>
<feature type="chain" id="PRO_0000290612" description="CCR4-Not complex 3'-5'-exoribonuclease subunit Ccr4">
    <location>
        <begin position="1"/>
        <end position="675"/>
    </location>
</feature>
<feature type="repeat" description="LRR 1">
    <location>
        <begin position="180"/>
        <end position="201"/>
    </location>
</feature>
<feature type="repeat" description="LRR 2">
    <location>
        <begin position="203"/>
        <end position="224"/>
    </location>
</feature>
<feature type="repeat" description="LRR 3">
    <location>
        <begin position="226"/>
        <end position="247"/>
    </location>
</feature>
<feature type="repeat" description="LRR 4">
    <location>
        <begin position="249"/>
        <end position="270"/>
    </location>
</feature>
<feature type="region of interest" description="Disordered" evidence="4">
    <location>
        <begin position="30"/>
        <end position="82"/>
    </location>
</feature>
<feature type="region of interest" description="Disordered" evidence="4">
    <location>
        <begin position="134"/>
        <end position="153"/>
    </location>
</feature>
<feature type="compositionally biased region" description="Basic residues" evidence="4">
    <location>
        <begin position="33"/>
        <end position="47"/>
    </location>
</feature>
<feature type="compositionally biased region" description="Polar residues" evidence="4">
    <location>
        <begin position="58"/>
        <end position="82"/>
    </location>
</feature>
<feature type="binding site" evidence="2">
    <location>
        <position position="360"/>
    </location>
    <ligand>
        <name>Mg(2+)</name>
        <dbReference type="ChEBI" id="CHEBI:18420"/>
    </ligand>
</feature>
<comment type="function">
    <text evidence="3">Acts as a catalytic component of the CCR4-NOT core complex, which in the nucleus seems to be a general transcription factor, and in the cytoplasm the major mRNA deadenylase involved in mRNA turnover (By similarity). Ccr4 has 3'-5' RNase activity with a strong preference for polyadenylated substrates and also low exonuclease activity towards single-stranded DNA (By similarity).</text>
</comment>
<comment type="catalytic activity">
    <reaction>
        <text>Exonucleolytic cleavage of poly(A) to 5'-AMP.</text>
        <dbReference type="EC" id="3.1.13.4"/>
    </reaction>
</comment>
<comment type="cofactor">
    <cofactor evidence="1">
        <name>Mg(2+)</name>
        <dbReference type="ChEBI" id="CHEBI:18420"/>
    </cofactor>
</comment>
<comment type="subcellular location">
    <subcellularLocation>
        <location evidence="1">Cytoplasm</location>
    </subcellularLocation>
    <subcellularLocation>
        <location evidence="1">Nucleus</location>
    </subcellularLocation>
</comment>
<comment type="similarity">
    <text evidence="5">Belongs to the CCR4/nocturin family.</text>
</comment>
<sequence>MYSQTHQQQHVIMNGGQAHQRFGMQMKFQTQNHHPHPAQQPHHHAHHNQPPQHVGHQHNFSSGALASATPHFTPSHIQNGTHTNIDEELDESMNEHWQQQLQLAAESRQASSPHYYARAVAQQTKGIQIAPSQPEAQENGVNQKNGITKTKPASRQGWHALDFGGQGLRALAPSLFKYAFLEKLYLSHNKLKVLPPQIGQLRKLTHLDLSANDLTELPEEIGMLTNLRHLLLFDNNIRTLPYEMGYLYRLEILGIEGNPLEDVLKSLIMKEGTKALIRYLKEEMPVHVPPPARDWLVLDETAATSPDKVSVLSYNTLCDSSATQSHYGYAPSRVLSWEFRRETILNELRAHDPDIICLQEIDQGSYNEFFREQLAYSDYKGVFWPRGRAMGMQEEDAKGVDGCATFFKGSKFILLDKQVINFGQTAVRRPDAKGQDDIYNRLWQKDHIAVIVFLENRQTGSRFIIVNAHLYWDPAFKDVKLIQTAILMEEITKHSEKYAKWPPCTDKAAFRFREAQGEQTMPEPAPSAEYASGDQIPLFMCGDFNSSPGSAAYNLIANGGLIEEHPDLEKRMYGNLSKVGMTHPFKLKSAYGAIGELSFTNYTPDFKDILDYIWYSSNTVHVSGLLGEVDKDYLQRVPGFPNYHFPSDHIALLAEFSVKGKKGKVVEADFGPQRN</sequence>
<keyword id="KW-0963">Cytoplasm</keyword>
<keyword id="KW-0269">Exonuclease</keyword>
<keyword id="KW-0378">Hydrolase</keyword>
<keyword id="KW-0433">Leucine-rich repeat</keyword>
<keyword id="KW-0460">Magnesium</keyword>
<keyword id="KW-0479">Metal-binding</keyword>
<keyword id="KW-0540">Nuclease</keyword>
<keyword id="KW-0539">Nucleus</keyword>
<keyword id="KW-1185">Reference proteome</keyword>
<keyword id="KW-0677">Repeat</keyword>
<keyword id="KW-0694">RNA-binding</keyword>
<keyword id="KW-0804">Transcription</keyword>
<keyword id="KW-0805">Transcription regulation</keyword>
<name>CCR4_EMENI</name>
<dbReference type="EC" id="3.1.13.4"/>
<dbReference type="EMBL" id="AACD01000061">
    <property type="protein sequence ID" value="EAA59810.1"/>
    <property type="molecule type" value="Genomic_DNA"/>
</dbReference>
<dbReference type="EMBL" id="BN001302">
    <property type="protein sequence ID" value="CBF75800.1"/>
    <property type="molecule type" value="Genomic_DNA"/>
</dbReference>
<dbReference type="RefSeq" id="XP_661206.1">
    <property type="nucleotide sequence ID" value="XM_656114.1"/>
</dbReference>
<dbReference type="SMR" id="Q5B778"/>
<dbReference type="FunCoup" id="Q5B778">
    <property type="interactions" value="441"/>
</dbReference>
<dbReference type="STRING" id="227321.Q5B778"/>
<dbReference type="EnsemblFungi" id="CBF75800">
    <property type="protein sequence ID" value="CBF75800"/>
    <property type="gene ID" value="ANIA_03602"/>
</dbReference>
<dbReference type="KEGG" id="ani:ANIA_03602"/>
<dbReference type="eggNOG" id="KOG0620">
    <property type="taxonomic scope" value="Eukaryota"/>
</dbReference>
<dbReference type="HOGENOM" id="CLU_016428_4_0_1"/>
<dbReference type="InParanoid" id="Q5B778"/>
<dbReference type="OMA" id="PHYYARA"/>
<dbReference type="OrthoDB" id="428734at2759"/>
<dbReference type="Proteomes" id="UP000000560">
    <property type="component" value="Chromosome II"/>
</dbReference>
<dbReference type="GO" id="GO:0030015">
    <property type="term" value="C:CCR4-NOT core complex"/>
    <property type="evidence" value="ECO:0007669"/>
    <property type="project" value="EnsemblFungi"/>
</dbReference>
<dbReference type="GO" id="GO:0005634">
    <property type="term" value="C:nucleus"/>
    <property type="evidence" value="ECO:0007669"/>
    <property type="project" value="UniProtKB-SubCell"/>
</dbReference>
<dbReference type="GO" id="GO:0000932">
    <property type="term" value="C:P-body"/>
    <property type="evidence" value="ECO:0007669"/>
    <property type="project" value="EnsemblFungi"/>
</dbReference>
<dbReference type="GO" id="GO:0000175">
    <property type="term" value="F:3'-5'-RNA exonuclease activity"/>
    <property type="evidence" value="ECO:0000318"/>
    <property type="project" value="GO_Central"/>
</dbReference>
<dbReference type="GO" id="GO:0046872">
    <property type="term" value="F:metal ion binding"/>
    <property type="evidence" value="ECO:0007669"/>
    <property type="project" value="UniProtKB-KW"/>
</dbReference>
<dbReference type="GO" id="GO:0004535">
    <property type="term" value="F:poly(A)-specific ribonuclease activity"/>
    <property type="evidence" value="ECO:0007669"/>
    <property type="project" value="UniProtKB-EC"/>
</dbReference>
<dbReference type="GO" id="GO:0003723">
    <property type="term" value="F:RNA binding"/>
    <property type="evidence" value="ECO:0007669"/>
    <property type="project" value="UniProtKB-KW"/>
</dbReference>
<dbReference type="GO" id="GO:0000289">
    <property type="term" value="P:nuclear-transcribed mRNA poly(A) tail shortening"/>
    <property type="evidence" value="ECO:0007669"/>
    <property type="project" value="EnsemblFungi"/>
</dbReference>
<dbReference type="CDD" id="cd09097">
    <property type="entry name" value="Deadenylase_CCR4"/>
    <property type="match status" value="1"/>
</dbReference>
<dbReference type="FunFam" id="3.60.10.10:FF:000037">
    <property type="entry name" value="Glucose-repressible alcohol dehydrogenase transcriptional effector"/>
    <property type="match status" value="1"/>
</dbReference>
<dbReference type="FunFam" id="3.80.10.10:FF:000447">
    <property type="entry name" value="Glucose-repressible alcohol dehydrogenase transcriptional effector"/>
    <property type="match status" value="1"/>
</dbReference>
<dbReference type="Gene3D" id="3.60.10.10">
    <property type="entry name" value="Endonuclease/exonuclease/phosphatase"/>
    <property type="match status" value="1"/>
</dbReference>
<dbReference type="Gene3D" id="3.80.10.10">
    <property type="entry name" value="Ribonuclease Inhibitor"/>
    <property type="match status" value="1"/>
</dbReference>
<dbReference type="InterPro" id="IPR050410">
    <property type="entry name" value="CCR4/nocturin_mRNA_transcr"/>
</dbReference>
<dbReference type="InterPro" id="IPR036691">
    <property type="entry name" value="Endo/exonu/phosph_ase_sf"/>
</dbReference>
<dbReference type="InterPro" id="IPR005135">
    <property type="entry name" value="Endo/exonuclease/phosphatase"/>
</dbReference>
<dbReference type="InterPro" id="IPR001611">
    <property type="entry name" value="Leu-rich_rpt"/>
</dbReference>
<dbReference type="InterPro" id="IPR025875">
    <property type="entry name" value="Leu-rich_rpt_4"/>
</dbReference>
<dbReference type="InterPro" id="IPR003591">
    <property type="entry name" value="Leu-rich_rpt_typical-subtyp"/>
</dbReference>
<dbReference type="InterPro" id="IPR032675">
    <property type="entry name" value="LRR_dom_sf"/>
</dbReference>
<dbReference type="PANTHER" id="PTHR12121">
    <property type="entry name" value="CARBON CATABOLITE REPRESSOR PROTEIN 4"/>
    <property type="match status" value="1"/>
</dbReference>
<dbReference type="PANTHER" id="PTHR12121:SF100">
    <property type="entry name" value="POLY(A)-SPECIFIC RIBONUCLEASE"/>
    <property type="match status" value="1"/>
</dbReference>
<dbReference type="Pfam" id="PF03372">
    <property type="entry name" value="Exo_endo_phos"/>
    <property type="match status" value="1"/>
</dbReference>
<dbReference type="Pfam" id="PF12799">
    <property type="entry name" value="LRR_4"/>
    <property type="match status" value="1"/>
</dbReference>
<dbReference type="SMART" id="SM00369">
    <property type="entry name" value="LRR_TYP"/>
    <property type="match status" value="3"/>
</dbReference>
<dbReference type="SUPFAM" id="SSF56219">
    <property type="entry name" value="DNase I-like"/>
    <property type="match status" value="1"/>
</dbReference>
<dbReference type="SUPFAM" id="SSF52058">
    <property type="entry name" value="L domain-like"/>
    <property type="match status" value="1"/>
</dbReference>
<dbReference type="PROSITE" id="PS51450">
    <property type="entry name" value="LRR"/>
    <property type="match status" value="4"/>
</dbReference>
<organism>
    <name type="scientific">Emericella nidulans (strain FGSC A4 / ATCC 38163 / CBS 112.46 / NRRL 194 / M139)</name>
    <name type="common">Aspergillus nidulans</name>
    <dbReference type="NCBI Taxonomy" id="227321"/>
    <lineage>
        <taxon>Eukaryota</taxon>
        <taxon>Fungi</taxon>
        <taxon>Dikarya</taxon>
        <taxon>Ascomycota</taxon>
        <taxon>Pezizomycotina</taxon>
        <taxon>Eurotiomycetes</taxon>
        <taxon>Eurotiomycetidae</taxon>
        <taxon>Eurotiales</taxon>
        <taxon>Aspergillaceae</taxon>
        <taxon>Aspergillus</taxon>
        <taxon>Aspergillus subgen. Nidulantes</taxon>
    </lineage>
</organism>
<accession>Q5B778</accession>
<accession>C8V477</accession>
<evidence type="ECO:0000250" key="1"/>
<evidence type="ECO:0000250" key="2">
    <source>
        <dbReference type="UniProtKB" id="O95551"/>
    </source>
</evidence>
<evidence type="ECO:0000250" key="3">
    <source>
        <dbReference type="UniProtKB" id="P31384"/>
    </source>
</evidence>
<evidence type="ECO:0000256" key="4">
    <source>
        <dbReference type="SAM" id="MobiDB-lite"/>
    </source>
</evidence>
<evidence type="ECO:0000305" key="5"/>